<keyword id="KW-0012">Acyltransferase</keyword>
<keyword id="KW-0133">Cell shape</keyword>
<keyword id="KW-0961">Cell wall biogenesis/degradation</keyword>
<keyword id="KW-0963">Cytoplasm</keyword>
<keyword id="KW-0460">Magnesium</keyword>
<keyword id="KW-0479">Metal-binding</keyword>
<keyword id="KW-0511">Multifunctional enzyme</keyword>
<keyword id="KW-0548">Nucleotidyltransferase</keyword>
<keyword id="KW-0573">Peptidoglycan synthesis</keyword>
<keyword id="KW-0677">Repeat</keyword>
<keyword id="KW-0808">Transferase</keyword>
<proteinExistence type="inferred from homology"/>
<protein>
    <recommendedName>
        <fullName evidence="1">Bifunctional protein GlmU</fullName>
    </recommendedName>
    <domain>
        <recommendedName>
            <fullName evidence="1">UDP-N-acetylglucosamine pyrophosphorylase</fullName>
            <ecNumber evidence="1">2.7.7.23</ecNumber>
        </recommendedName>
        <alternativeName>
            <fullName evidence="1">N-acetylglucosamine-1-phosphate uridyltransferase</fullName>
        </alternativeName>
    </domain>
    <domain>
        <recommendedName>
            <fullName evidence="1">Glucosamine-1-phosphate N-acetyltransferase</fullName>
            <ecNumber evidence="1">2.3.1.157</ecNumber>
        </recommendedName>
    </domain>
</protein>
<reference key="1">
    <citation type="journal article" date="2008" name="J. Bacteriol.">
        <title>Genome of the actinomycete plant pathogen Clavibacter michiganensis subsp. sepedonicus suggests recent niche adaptation.</title>
        <authorList>
            <person name="Bentley S.D."/>
            <person name="Corton C."/>
            <person name="Brown S.E."/>
            <person name="Barron A."/>
            <person name="Clark L."/>
            <person name="Doggett J."/>
            <person name="Harris B."/>
            <person name="Ormond D."/>
            <person name="Quail M.A."/>
            <person name="May G."/>
            <person name="Francis D."/>
            <person name="Knudson D."/>
            <person name="Parkhill J."/>
            <person name="Ishimaru C.A."/>
        </authorList>
    </citation>
    <scope>NUCLEOTIDE SEQUENCE [LARGE SCALE GENOMIC DNA]</scope>
    <source>
        <strain>ATCC 33113 / DSM 20744 / JCM 9667 / LMG 2889 / ICMP 2535 / C-1</strain>
    </source>
</reference>
<name>GLMU_CLASE</name>
<gene>
    <name evidence="1" type="primary">glmU</name>
    <name type="ordered locus">CMS2470</name>
</gene>
<evidence type="ECO:0000255" key="1">
    <source>
        <dbReference type="HAMAP-Rule" id="MF_01631"/>
    </source>
</evidence>
<evidence type="ECO:0000256" key="2">
    <source>
        <dbReference type="SAM" id="MobiDB-lite"/>
    </source>
</evidence>
<organism>
    <name type="scientific">Clavibacter sepedonicus</name>
    <name type="common">Clavibacter michiganensis subsp. sepedonicus</name>
    <dbReference type="NCBI Taxonomy" id="31964"/>
    <lineage>
        <taxon>Bacteria</taxon>
        <taxon>Bacillati</taxon>
        <taxon>Actinomycetota</taxon>
        <taxon>Actinomycetes</taxon>
        <taxon>Micrococcales</taxon>
        <taxon>Microbacteriaceae</taxon>
        <taxon>Clavibacter</taxon>
    </lineage>
</organism>
<accession>B0RHI9</accession>
<feature type="chain" id="PRO_0000337716" description="Bifunctional protein GlmU">
    <location>
        <begin position="1"/>
        <end position="493"/>
    </location>
</feature>
<feature type="region of interest" description="Pyrophosphorylase" evidence="1">
    <location>
        <begin position="1"/>
        <end position="246"/>
    </location>
</feature>
<feature type="region of interest" description="Linker" evidence="1">
    <location>
        <begin position="247"/>
        <end position="267"/>
    </location>
</feature>
<feature type="region of interest" description="N-acetyltransferase" evidence="1">
    <location>
        <begin position="268"/>
        <end position="493"/>
    </location>
</feature>
<feature type="region of interest" description="Disordered" evidence="2">
    <location>
        <begin position="470"/>
        <end position="493"/>
    </location>
</feature>
<feature type="active site" description="Proton acceptor" evidence="1">
    <location>
        <position position="379"/>
    </location>
</feature>
<feature type="binding site" evidence="1">
    <location>
        <begin position="21"/>
        <end position="24"/>
    </location>
    <ligand>
        <name>UDP-N-acetyl-alpha-D-glucosamine</name>
        <dbReference type="ChEBI" id="CHEBI:57705"/>
    </ligand>
</feature>
<feature type="binding site" evidence="1">
    <location>
        <position position="35"/>
    </location>
    <ligand>
        <name>UDP-N-acetyl-alpha-D-glucosamine</name>
        <dbReference type="ChEBI" id="CHEBI:57705"/>
    </ligand>
</feature>
<feature type="binding site" evidence="1">
    <location>
        <position position="88"/>
    </location>
    <ligand>
        <name>UDP-N-acetyl-alpha-D-glucosamine</name>
        <dbReference type="ChEBI" id="CHEBI:57705"/>
    </ligand>
</feature>
<feature type="binding site" evidence="1">
    <location>
        <begin position="93"/>
        <end position="94"/>
    </location>
    <ligand>
        <name>UDP-N-acetyl-alpha-D-glucosamine</name>
        <dbReference type="ChEBI" id="CHEBI:57705"/>
    </ligand>
</feature>
<feature type="binding site" evidence="1">
    <location>
        <begin position="117"/>
        <end position="119"/>
    </location>
    <ligand>
        <name>UDP-N-acetyl-alpha-D-glucosamine</name>
        <dbReference type="ChEBI" id="CHEBI:57705"/>
    </ligand>
</feature>
<feature type="binding site" evidence="1">
    <location>
        <position position="119"/>
    </location>
    <ligand>
        <name>Mg(2+)</name>
        <dbReference type="ChEBI" id="CHEBI:18420"/>
    </ligand>
</feature>
<feature type="binding site" evidence="1">
    <location>
        <position position="156"/>
    </location>
    <ligand>
        <name>UDP-N-acetyl-alpha-D-glucosamine</name>
        <dbReference type="ChEBI" id="CHEBI:57705"/>
    </ligand>
</feature>
<feature type="binding site" evidence="1">
    <location>
        <position position="171"/>
    </location>
    <ligand>
        <name>UDP-N-acetyl-alpha-D-glucosamine</name>
        <dbReference type="ChEBI" id="CHEBI:57705"/>
    </ligand>
</feature>
<feature type="binding site" evidence="1">
    <location>
        <position position="186"/>
    </location>
    <ligand>
        <name>UDP-N-acetyl-alpha-D-glucosamine</name>
        <dbReference type="ChEBI" id="CHEBI:57705"/>
    </ligand>
</feature>
<feature type="binding site" evidence="1">
    <location>
        <position position="244"/>
    </location>
    <ligand>
        <name>Mg(2+)</name>
        <dbReference type="ChEBI" id="CHEBI:18420"/>
    </ligand>
</feature>
<feature type="binding site" evidence="1">
    <location>
        <position position="244"/>
    </location>
    <ligand>
        <name>UDP-N-acetyl-alpha-D-glucosamine</name>
        <dbReference type="ChEBI" id="CHEBI:57705"/>
    </ligand>
</feature>
<feature type="binding site" evidence="1">
    <location>
        <position position="349"/>
    </location>
    <ligand>
        <name>UDP-N-acetyl-alpha-D-glucosamine</name>
        <dbReference type="ChEBI" id="CHEBI:57705"/>
    </ligand>
</feature>
<feature type="binding site" evidence="1">
    <location>
        <position position="367"/>
    </location>
    <ligand>
        <name>UDP-N-acetyl-alpha-D-glucosamine</name>
        <dbReference type="ChEBI" id="CHEBI:57705"/>
    </ligand>
</feature>
<feature type="binding site" evidence="1">
    <location>
        <position position="382"/>
    </location>
    <ligand>
        <name>UDP-N-acetyl-alpha-D-glucosamine</name>
        <dbReference type="ChEBI" id="CHEBI:57705"/>
    </ligand>
</feature>
<feature type="binding site" evidence="1">
    <location>
        <position position="393"/>
    </location>
    <ligand>
        <name>UDP-N-acetyl-alpha-D-glucosamine</name>
        <dbReference type="ChEBI" id="CHEBI:57705"/>
    </ligand>
</feature>
<feature type="binding site" evidence="1">
    <location>
        <position position="396"/>
    </location>
    <ligand>
        <name>acetyl-CoA</name>
        <dbReference type="ChEBI" id="CHEBI:57288"/>
    </ligand>
</feature>
<feature type="binding site" evidence="1">
    <location>
        <begin position="402"/>
        <end position="403"/>
    </location>
    <ligand>
        <name>acetyl-CoA</name>
        <dbReference type="ChEBI" id="CHEBI:57288"/>
    </ligand>
</feature>
<feature type="binding site" evidence="1">
    <location>
        <position position="421"/>
    </location>
    <ligand>
        <name>acetyl-CoA</name>
        <dbReference type="ChEBI" id="CHEBI:57288"/>
    </ligand>
</feature>
<feature type="binding site" evidence="1">
    <location>
        <position position="439"/>
    </location>
    <ligand>
        <name>acetyl-CoA</name>
        <dbReference type="ChEBI" id="CHEBI:57288"/>
    </ligand>
</feature>
<sequence>MTGELDVDGEPRSPSIAVVILAAGQGTRMRSRLPKVLHPLAGLPLVGHVLATAEELGARHVVTVVRHDRDQVVDVVSRLAPDALIVDQDEIPGTGRAVEVGITALPDGFTGQVVVLSGDVPLLDAATLRSLVSAHRQARNDLTLLTARLDDPTGNGRIIRGQDGAFEAIVEQKDATGEQLRIDEVNAGVYVFDAEALRQTLGAIGTDNAQREKYLTDAADVIRRAGGSIEALPVRDSWLVAGINDRVQLTAAATELNARIIRRWQLAGVTIHDPRTTWIDVKATLAADVTVLPGTQILGASTVAAGATVGPDTTLRDTEVGEDATVRRTDAELAVIGARATVGPFSFLRPGTRLGDEGKIGAYVETKNVEIGAGSKVPHLSYVGDATIGEHSNVGAGAVFANYDGVSKHRTEVGDHVHLGSRNVLVAPVRIGTGSYTGAGAVIRKDVPPGALGISVAPQRNMVGWTEAKRPGTPEARAAVEAADGPADDASDA</sequence>
<comment type="function">
    <text evidence="1">Catalyzes the last two sequential reactions in the de novo biosynthetic pathway for UDP-N-acetylglucosamine (UDP-GlcNAc). The C-terminal domain catalyzes the transfer of acetyl group from acetyl coenzyme A to glucosamine-1-phosphate (GlcN-1-P) to produce N-acetylglucosamine-1-phosphate (GlcNAc-1-P), which is converted into UDP-GlcNAc by the transfer of uridine 5-monophosphate (from uridine 5-triphosphate), a reaction catalyzed by the N-terminal domain.</text>
</comment>
<comment type="catalytic activity">
    <reaction evidence="1">
        <text>alpha-D-glucosamine 1-phosphate + acetyl-CoA = N-acetyl-alpha-D-glucosamine 1-phosphate + CoA + H(+)</text>
        <dbReference type="Rhea" id="RHEA:13725"/>
        <dbReference type="ChEBI" id="CHEBI:15378"/>
        <dbReference type="ChEBI" id="CHEBI:57287"/>
        <dbReference type="ChEBI" id="CHEBI:57288"/>
        <dbReference type="ChEBI" id="CHEBI:57776"/>
        <dbReference type="ChEBI" id="CHEBI:58516"/>
        <dbReference type="EC" id="2.3.1.157"/>
    </reaction>
</comment>
<comment type="catalytic activity">
    <reaction evidence="1">
        <text>N-acetyl-alpha-D-glucosamine 1-phosphate + UTP + H(+) = UDP-N-acetyl-alpha-D-glucosamine + diphosphate</text>
        <dbReference type="Rhea" id="RHEA:13509"/>
        <dbReference type="ChEBI" id="CHEBI:15378"/>
        <dbReference type="ChEBI" id="CHEBI:33019"/>
        <dbReference type="ChEBI" id="CHEBI:46398"/>
        <dbReference type="ChEBI" id="CHEBI:57705"/>
        <dbReference type="ChEBI" id="CHEBI:57776"/>
        <dbReference type="EC" id="2.7.7.23"/>
    </reaction>
</comment>
<comment type="cofactor">
    <cofactor evidence="1">
        <name>Mg(2+)</name>
        <dbReference type="ChEBI" id="CHEBI:18420"/>
    </cofactor>
    <text evidence="1">Binds 1 Mg(2+) ion per subunit.</text>
</comment>
<comment type="pathway">
    <text evidence="1">Nucleotide-sugar biosynthesis; UDP-N-acetyl-alpha-D-glucosamine biosynthesis; N-acetyl-alpha-D-glucosamine 1-phosphate from alpha-D-glucosamine 6-phosphate (route II): step 2/2.</text>
</comment>
<comment type="pathway">
    <text evidence="1">Nucleotide-sugar biosynthesis; UDP-N-acetyl-alpha-D-glucosamine biosynthesis; UDP-N-acetyl-alpha-D-glucosamine from N-acetyl-alpha-D-glucosamine 1-phosphate: step 1/1.</text>
</comment>
<comment type="pathway">
    <text evidence="1">Bacterial outer membrane biogenesis; LPS lipid A biosynthesis.</text>
</comment>
<comment type="subunit">
    <text evidence="1">Homotrimer.</text>
</comment>
<comment type="subcellular location">
    <subcellularLocation>
        <location evidence="1">Cytoplasm</location>
    </subcellularLocation>
</comment>
<comment type="similarity">
    <text evidence="1">In the N-terminal section; belongs to the N-acetylglucosamine-1-phosphate uridyltransferase family.</text>
</comment>
<comment type="similarity">
    <text evidence="1">In the C-terminal section; belongs to the transferase hexapeptide repeat family.</text>
</comment>
<dbReference type="EC" id="2.7.7.23" evidence="1"/>
<dbReference type="EC" id="2.3.1.157" evidence="1"/>
<dbReference type="EMBL" id="AM849034">
    <property type="protein sequence ID" value="CAQ02550.1"/>
    <property type="molecule type" value="Genomic_DNA"/>
</dbReference>
<dbReference type="SMR" id="B0RHI9"/>
<dbReference type="STRING" id="31964.CMS2470"/>
<dbReference type="KEGG" id="cms:CMS2470"/>
<dbReference type="eggNOG" id="COG1207">
    <property type="taxonomic scope" value="Bacteria"/>
</dbReference>
<dbReference type="HOGENOM" id="CLU_029499_15_2_11"/>
<dbReference type="UniPathway" id="UPA00113">
    <property type="reaction ID" value="UER00532"/>
</dbReference>
<dbReference type="UniPathway" id="UPA00113">
    <property type="reaction ID" value="UER00533"/>
</dbReference>
<dbReference type="UniPathway" id="UPA00973"/>
<dbReference type="Proteomes" id="UP000001318">
    <property type="component" value="Chromosome"/>
</dbReference>
<dbReference type="GO" id="GO:0005737">
    <property type="term" value="C:cytoplasm"/>
    <property type="evidence" value="ECO:0007669"/>
    <property type="project" value="UniProtKB-SubCell"/>
</dbReference>
<dbReference type="GO" id="GO:0016020">
    <property type="term" value="C:membrane"/>
    <property type="evidence" value="ECO:0007669"/>
    <property type="project" value="GOC"/>
</dbReference>
<dbReference type="GO" id="GO:0019134">
    <property type="term" value="F:glucosamine-1-phosphate N-acetyltransferase activity"/>
    <property type="evidence" value="ECO:0007669"/>
    <property type="project" value="UniProtKB-UniRule"/>
</dbReference>
<dbReference type="GO" id="GO:0000287">
    <property type="term" value="F:magnesium ion binding"/>
    <property type="evidence" value="ECO:0007669"/>
    <property type="project" value="UniProtKB-UniRule"/>
</dbReference>
<dbReference type="GO" id="GO:0003977">
    <property type="term" value="F:UDP-N-acetylglucosamine diphosphorylase activity"/>
    <property type="evidence" value="ECO:0007669"/>
    <property type="project" value="UniProtKB-UniRule"/>
</dbReference>
<dbReference type="GO" id="GO:0000902">
    <property type="term" value="P:cell morphogenesis"/>
    <property type="evidence" value="ECO:0007669"/>
    <property type="project" value="UniProtKB-UniRule"/>
</dbReference>
<dbReference type="GO" id="GO:0071555">
    <property type="term" value="P:cell wall organization"/>
    <property type="evidence" value="ECO:0007669"/>
    <property type="project" value="UniProtKB-KW"/>
</dbReference>
<dbReference type="GO" id="GO:0009245">
    <property type="term" value="P:lipid A biosynthetic process"/>
    <property type="evidence" value="ECO:0007669"/>
    <property type="project" value="UniProtKB-UniRule"/>
</dbReference>
<dbReference type="GO" id="GO:0009252">
    <property type="term" value="P:peptidoglycan biosynthetic process"/>
    <property type="evidence" value="ECO:0007669"/>
    <property type="project" value="UniProtKB-UniRule"/>
</dbReference>
<dbReference type="GO" id="GO:0008360">
    <property type="term" value="P:regulation of cell shape"/>
    <property type="evidence" value="ECO:0007669"/>
    <property type="project" value="UniProtKB-KW"/>
</dbReference>
<dbReference type="GO" id="GO:0006048">
    <property type="term" value="P:UDP-N-acetylglucosamine biosynthetic process"/>
    <property type="evidence" value="ECO:0007669"/>
    <property type="project" value="UniProtKB-UniPathway"/>
</dbReference>
<dbReference type="CDD" id="cd02540">
    <property type="entry name" value="GT2_GlmU_N_bac"/>
    <property type="match status" value="1"/>
</dbReference>
<dbReference type="CDD" id="cd03353">
    <property type="entry name" value="LbH_GlmU_C"/>
    <property type="match status" value="1"/>
</dbReference>
<dbReference type="Gene3D" id="2.160.10.10">
    <property type="entry name" value="Hexapeptide repeat proteins"/>
    <property type="match status" value="1"/>
</dbReference>
<dbReference type="Gene3D" id="3.90.550.10">
    <property type="entry name" value="Spore Coat Polysaccharide Biosynthesis Protein SpsA, Chain A"/>
    <property type="match status" value="1"/>
</dbReference>
<dbReference type="HAMAP" id="MF_01631">
    <property type="entry name" value="GlmU"/>
    <property type="match status" value="1"/>
</dbReference>
<dbReference type="InterPro" id="IPR005882">
    <property type="entry name" value="Bifunctional_GlmU"/>
</dbReference>
<dbReference type="InterPro" id="IPR050065">
    <property type="entry name" value="GlmU-like"/>
</dbReference>
<dbReference type="InterPro" id="IPR038009">
    <property type="entry name" value="GlmU_C_LbH"/>
</dbReference>
<dbReference type="InterPro" id="IPR025877">
    <property type="entry name" value="MobA-like_NTP_Trfase"/>
</dbReference>
<dbReference type="InterPro" id="IPR029044">
    <property type="entry name" value="Nucleotide-diphossugar_trans"/>
</dbReference>
<dbReference type="InterPro" id="IPR011004">
    <property type="entry name" value="Trimer_LpxA-like_sf"/>
</dbReference>
<dbReference type="NCBIfam" id="TIGR01173">
    <property type="entry name" value="glmU"/>
    <property type="match status" value="1"/>
</dbReference>
<dbReference type="NCBIfam" id="NF010932">
    <property type="entry name" value="PRK14352.1"/>
    <property type="match status" value="1"/>
</dbReference>
<dbReference type="PANTHER" id="PTHR43584:SF3">
    <property type="entry name" value="BIFUNCTIONAL PROTEIN GLMU"/>
    <property type="match status" value="1"/>
</dbReference>
<dbReference type="PANTHER" id="PTHR43584">
    <property type="entry name" value="NUCLEOTIDYL TRANSFERASE"/>
    <property type="match status" value="1"/>
</dbReference>
<dbReference type="Pfam" id="PF12804">
    <property type="entry name" value="NTP_transf_3"/>
    <property type="match status" value="1"/>
</dbReference>
<dbReference type="SUPFAM" id="SSF53448">
    <property type="entry name" value="Nucleotide-diphospho-sugar transferases"/>
    <property type="match status" value="1"/>
</dbReference>
<dbReference type="SUPFAM" id="SSF51161">
    <property type="entry name" value="Trimeric LpxA-like enzymes"/>
    <property type="match status" value="1"/>
</dbReference>